<reference key="1">
    <citation type="journal article" date="1998" name="Science">
        <title>Zebrafish hox clusters and vertebrate genome evolution.</title>
        <authorList>
            <person name="Amores A."/>
            <person name="Force A."/>
            <person name="Yan Y.-L."/>
            <person name="Joly L."/>
            <person name="Amemiya C."/>
            <person name="Fritz A."/>
            <person name="Ho R.K."/>
            <person name="Langeland J."/>
            <person name="Prince V.E."/>
            <person name="Wang Y.-L."/>
            <person name="Westerfield M."/>
            <person name="Ekker M."/>
            <person name="Postlethwait J.H."/>
        </authorList>
    </citation>
    <scope>NUCLEOTIDE SEQUENCE [GENOMIC DNA]</scope>
</reference>
<reference key="2">
    <citation type="journal article" date="2004" name="Proc. Natl. Acad. Sci. U.S.A.">
        <title>Hematopoietic gene expression profile in zebrafish kidney marrow.</title>
        <authorList>
            <person name="Song H.-D."/>
            <person name="Sun X.-J."/>
            <person name="Deng M."/>
            <person name="Zhang G.-W."/>
            <person name="Zhou Y."/>
            <person name="Wu X.-Y."/>
            <person name="Sheng Y."/>
            <person name="Chen Y."/>
            <person name="Ruan Z."/>
            <person name="Jiang C.-L."/>
            <person name="Fan H.-Y."/>
            <person name="Zon L.I."/>
            <person name="Kanki J.P."/>
            <person name="Liu T.X."/>
            <person name="Look A.T."/>
            <person name="Chen Z."/>
        </authorList>
    </citation>
    <scope>NUCLEOTIDE SEQUENCE [LARGE SCALE MRNA]</scope>
    <source>
        <tissue>Kidney marrow</tissue>
    </source>
</reference>
<reference key="3">
    <citation type="submission" date="2005-06" db="EMBL/GenBank/DDBJ databases">
        <authorList>
            <consortium name="NIH - Zebrafish Gene Collection (ZGC) project"/>
        </authorList>
    </citation>
    <scope>NUCLEOTIDE SEQUENCE [LARGE SCALE MRNA]</scope>
    <source>
        <tissue>Larva</tissue>
    </source>
</reference>
<reference key="4">
    <citation type="journal article" date="2005" name="Evol. Dev.">
        <title>Genomic annotation and transcriptome analysis of the zebrafish (Danio rerio) hox complex with description of a novel member, hoxb13a.</title>
        <authorList>
            <person name="Corredor-Adamez M."/>
            <person name="Welten M.C.M."/>
            <person name="Spaink H.P."/>
            <person name="Jeffery J.E."/>
            <person name="Schoon R.T."/>
            <person name="de Bakker M.A.G."/>
            <person name="Bagowski C.P."/>
            <person name="Meijer A.H."/>
            <person name="Verbeek F.J."/>
            <person name="Richardson M.K."/>
        </authorList>
    </citation>
    <scope>NUCLEOTIDE SEQUENCE [MRNA] OF 83-183</scope>
    <source>
        <strain>Tuebingen</strain>
    </source>
</reference>
<reference key="5">
    <citation type="journal article" date="1998" name="Development">
        <title>Zebrafish hox genes: genomic organization and modified colinear expression patterns in the trunk.</title>
        <authorList>
            <person name="Prince V.E."/>
            <person name="Joly L."/>
            <person name="Ekker M."/>
            <person name="Ho R.K."/>
        </authorList>
    </citation>
    <scope>NUCLEOTIDE SEQUENCE [MRNA] OF 218-249</scope>
    <scope>DEVELOPMENTAL STAGE</scope>
    <source>
        <tissue>Embryo</tissue>
    </source>
</reference>
<gene>
    <name type="primary">hoxb9a</name>
    <name type="synonym">hoxb9</name>
</gene>
<protein>
    <recommendedName>
        <fullName>Homeobox protein Hox-B9a</fullName>
        <shortName>Hox-B9</shortName>
    </recommendedName>
</protein>
<comment type="function">
    <text evidence="1">Sequence-specific transcription factor which is part of a developmental regulatory system that provides cells with specific positional identities on the anterior-posterior axis.</text>
</comment>
<comment type="subcellular location">
    <subcellularLocation>
        <location evidence="2">Nucleus</location>
    </subcellularLocation>
</comment>
<comment type="developmental stage">
    <text evidence="4">At the 10-somite stage, expressed in the paraxial mesoderm with an anterior expression limit at somite 7. At the 20-somite stage, expressed in the developing CNS with an anterior expression limit adjacent to the somite 3/somite 4 boundary.</text>
</comment>
<comment type="similarity">
    <text evidence="5">Belongs to the Abd-B homeobox family.</text>
</comment>
<comment type="sequence caution" evidence="5">
    <conflict type="miscellaneous discrepancy">
        <sequence resource="EMBL-CDS" id="AAH83312"/>
    </conflict>
    <text>Contaminating sequence. Potential poly-A sequence.</text>
</comment>
<feature type="chain" id="PRO_0000200157" description="Homeobox protein Hox-B9a">
    <location>
        <begin position="1"/>
        <end position="249"/>
    </location>
</feature>
<feature type="DNA-binding region" description="Homeobox" evidence="2">
    <location>
        <begin position="184"/>
        <end position="243"/>
    </location>
</feature>
<feature type="region of interest" description="Disordered" evidence="3">
    <location>
        <begin position="146"/>
        <end position="182"/>
    </location>
</feature>
<feature type="compositionally biased region" description="Basic and acidic residues" evidence="3">
    <location>
        <begin position="152"/>
        <end position="169"/>
    </location>
</feature>
<feature type="sequence conflict" description="In Ref. 3; AAH96950." evidence="5" ref="3">
    <original>D</original>
    <variation>E</variation>
    <location>
        <position position="158"/>
    </location>
</feature>
<feature type="sequence conflict" description="In Ref. 2; AAQ91242." evidence="5" ref="2">
    <original>ICEGSEDKEGPDQNDPSANWLHARSSRK</original>
    <variation>MRRQRRQRGTGSKRPICQLVTRSIIPE</variation>
    <location>
        <begin position="159"/>
        <end position="186"/>
    </location>
</feature>
<feature type="sequence conflict" description="In Ref. 3; AAH83312." evidence="5" ref="3">
    <original>K</original>
    <variation>I</variation>
    <location>
        <position position="166"/>
    </location>
</feature>
<feature type="sequence conflict" description="In Ref. 1; AAD15949." evidence="5" ref="1">
    <original>GPDQ</original>
    <variation>DRIKVSYNLG</variation>
    <location>
        <begin position="168"/>
        <end position="171"/>
    </location>
</feature>
<organism>
    <name type="scientific">Danio rerio</name>
    <name type="common">Zebrafish</name>
    <name type="synonym">Brachydanio rerio</name>
    <dbReference type="NCBI Taxonomy" id="7955"/>
    <lineage>
        <taxon>Eukaryota</taxon>
        <taxon>Metazoa</taxon>
        <taxon>Chordata</taxon>
        <taxon>Craniata</taxon>
        <taxon>Vertebrata</taxon>
        <taxon>Euteleostomi</taxon>
        <taxon>Actinopterygii</taxon>
        <taxon>Neopterygii</taxon>
        <taxon>Teleostei</taxon>
        <taxon>Ostariophysi</taxon>
        <taxon>Cypriniformes</taxon>
        <taxon>Danionidae</taxon>
        <taxon>Danioninae</taxon>
        <taxon>Danio</taxon>
    </lineage>
</organism>
<accession>Q9PWM2</accession>
<accession>O57364</accession>
<accession>Q4PR99</accession>
<accession>Q4V9D1</accession>
<accession>Q5XJI9</accession>
<accession>Q6TNT7</accession>
<evidence type="ECO:0000250" key="1"/>
<evidence type="ECO:0000255" key="2">
    <source>
        <dbReference type="PROSITE-ProRule" id="PRU00108"/>
    </source>
</evidence>
<evidence type="ECO:0000256" key="3">
    <source>
        <dbReference type="SAM" id="MobiDB-lite"/>
    </source>
</evidence>
<evidence type="ECO:0000269" key="4">
    <source>
    </source>
</evidence>
<evidence type="ECO:0000305" key="5"/>
<proteinExistence type="evidence at transcript level"/>
<keyword id="KW-0217">Developmental protein</keyword>
<keyword id="KW-0238">DNA-binding</keyword>
<keyword id="KW-0371">Homeobox</keyword>
<keyword id="KW-0539">Nucleus</keyword>
<keyword id="KW-1185">Reference proteome</keyword>
<keyword id="KW-0804">Transcription</keyword>
<keyword id="KW-0805">Transcription regulation</keyword>
<sequence length="249" mass="28438">MSISGTLSNYYVDSIISHEGEDPNASRFSNVQYSSARQPGPGEHPEFPSCSFQPKPPVFSSSWSPFSSHASNGLPAVYHPYIPTQPVPSTDTRYLRTWLDCAPRAEPLPGQGQVKMEPLLGHLGEPPKLVGQHEYILESSTAREINSGHSAGFEDNKDICEGSEDKEGPDQNDPSANWLHARSSRKKRCPYTKYQTLELEKEFLFNMYLTRDRRHEVARLLNLTERQVKIWFQNRRMKMKKMNKDQPKE</sequence>
<name>HXB9A_DANRE</name>
<dbReference type="EMBL" id="AF071256">
    <property type="protein sequence ID" value="AAD15949.1"/>
    <property type="molecule type" value="Genomic_DNA"/>
</dbReference>
<dbReference type="EMBL" id="AY391430">
    <property type="protein sequence ID" value="AAQ91242.1"/>
    <property type="molecule type" value="mRNA"/>
</dbReference>
<dbReference type="EMBL" id="BC083312">
    <property type="protein sequence ID" value="AAH83312.1"/>
    <property type="status" value="ALT_SEQ"/>
    <property type="molecule type" value="mRNA"/>
</dbReference>
<dbReference type="EMBL" id="BC096950">
    <property type="protein sequence ID" value="AAH96950.1"/>
    <property type="molecule type" value="mRNA"/>
</dbReference>
<dbReference type="EMBL" id="DQ060544">
    <property type="protein sequence ID" value="AAY67922.1"/>
    <property type="molecule type" value="mRNA"/>
</dbReference>
<dbReference type="EMBL" id="Y14529">
    <property type="protein sequence ID" value="CAA74864.1"/>
    <property type="molecule type" value="mRNA"/>
</dbReference>
<dbReference type="RefSeq" id="NP_571196.2">
    <property type="nucleotide sequence ID" value="NM_131121.2"/>
</dbReference>
<dbReference type="SMR" id="Q9PWM2"/>
<dbReference type="FunCoup" id="Q9PWM2">
    <property type="interactions" value="58"/>
</dbReference>
<dbReference type="STRING" id="7955.ENSDARP00000022169"/>
<dbReference type="PaxDb" id="7955-ENSDARP00000007852"/>
<dbReference type="Ensembl" id="ENSDART00000023674">
    <property type="protein sequence ID" value="ENSDARP00000022169"/>
    <property type="gene ID" value="ENSDARG00000056023"/>
</dbReference>
<dbReference type="GeneID" id="30344"/>
<dbReference type="KEGG" id="dre:30344"/>
<dbReference type="AGR" id="ZFIN:ZDB-GENE-990415-109"/>
<dbReference type="CTD" id="30344"/>
<dbReference type="ZFIN" id="ZDB-GENE-990415-109">
    <property type="gene designation" value="hoxb9a"/>
</dbReference>
<dbReference type="eggNOG" id="KOG0487">
    <property type="taxonomic scope" value="Eukaryota"/>
</dbReference>
<dbReference type="HOGENOM" id="CLU_071854_1_0_1"/>
<dbReference type="InParanoid" id="Q9PWM2"/>
<dbReference type="OMA" id="EDSKDIC"/>
<dbReference type="OrthoDB" id="6159439at2759"/>
<dbReference type="PhylomeDB" id="Q9PWM2"/>
<dbReference type="TreeFam" id="TF317819"/>
<dbReference type="PRO" id="PR:Q9PWM2"/>
<dbReference type="Proteomes" id="UP000000437">
    <property type="component" value="Chromosome 3"/>
</dbReference>
<dbReference type="Bgee" id="ENSDARG00000056023">
    <property type="expression patterns" value="Expressed in somite and 16 other cell types or tissues"/>
</dbReference>
<dbReference type="GO" id="GO:0005634">
    <property type="term" value="C:nucleus"/>
    <property type="evidence" value="ECO:0000318"/>
    <property type="project" value="GO_Central"/>
</dbReference>
<dbReference type="GO" id="GO:0003700">
    <property type="term" value="F:DNA-binding transcription factor activity"/>
    <property type="evidence" value="ECO:0000318"/>
    <property type="project" value="GO_Central"/>
</dbReference>
<dbReference type="GO" id="GO:0000981">
    <property type="term" value="F:DNA-binding transcription factor activity, RNA polymerase II-specific"/>
    <property type="evidence" value="ECO:0007669"/>
    <property type="project" value="InterPro"/>
</dbReference>
<dbReference type="GO" id="GO:0000978">
    <property type="term" value="F:RNA polymerase II cis-regulatory region sequence-specific DNA binding"/>
    <property type="evidence" value="ECO:0000318"/>
    <property type="project" value="GO_Central"/>
</dbReference>
<dbReference type="GO" id="GO:0009952">
    <property type="term" value="P:anterior/posterior pattern specification"/>
    <property type="evidence" value="ECO:0000318"/>
    <property type="project" value="GO_Central"/>
</dbReference>
<dbReference type="GO" id="GO:0006351">
    <property type="term" value="P:DNA-templated transcription"/>
    <property type="evidence" value="ECO:0007669"/>
    <property type="project" value="InterPro"/>
</dbReference>
<dbReference type="GO" id="GO:0048704">
    <property type="term" value="P:embryonic skeletal system morphogenesis"/>
    <property type="evidence" value="ECO:0000318"/>
    <property type="project" value="GO_Central"/>
</dbReference>
<dbReference type="GO" id="GO:0009954">
    <property type="term" value="P:proximal/distal pattern formation"/>
    <property type="evidence" value="ECO:0000318"/>
    <property type="project" value="GO_Central"/>
</dbReference>
<dbReference type="GO" id="GO:0006357">
    <property type="term" value="P:regulation of transcription by RNA polymerase II"/>
    <property type="evidence" value="ECO:0000318"/>
    <property type="project" value="GO_Central"/>
</dbReference>
<dbReference type="CDD" id="cd00086">
    <property type="entry name" value="homeodomain"/>
    <property type="match status" value="1"/>
</dbReference>
<dbReference type="FunFam" id="1.10.10.60:FF:000018">
    <property type="entry name" value="Homeobox A10"/>
    <property type="match status" value="1"/>
</dbReference>
<dbReference type="Gene3D" id="1.10.10.60">
    <property type="entry name" value="Homeodomain-like"/>
    <property type="match status" value="1"/>
</dbReference>
<dbReference type="InterPro" id="IPR050803">
    <property type="entry name" value="Abd-B_homeobox_TF"/>
</dbReference>
<dbReference type="InterPro" id="IPR001356">
    <property type="entry name" value="HD"/>
</dbReference>
<dbReference type="InterPro" id="IPR020479">
    <property type="entry name" value="HD_metazoa"/>
</dbReference>
<dbReference type="InterPro" id="IPR017970">
    <property type="entry name" value="Homeobox_CS"/>
</dbReference>
<dbReference type="InterPro" id="IPR009057">
    <property type="entry name" value="Homeodomain-like_sf"/>
</dbReference>
<dbReference type="InterPro" id="IPR006711">
    <property type="entry name" value="Hox9_activation_N"/>
</dbReference>
<dbReference type="InterPro" id="IPR017112">
    <property type="entry name" value="HXA9/HXB9/HXC9"/>
</dbReference>
<dbReference type="PANTHER" id="PTHR45970">
    <property type="entry name" value="AGAP004664-PA"/>
    <property type="match status" value="1"/>
</dbReference>
<dbReference type="PANTHER" id="PTHR45970:SF5">
    <property type="entry name" value="HOMEOBOX PROTEIN HOX-B9"/>
    <property type="match status" value="1"/>
</dbReference>
<dbReference type="Pfam" id="PF00046">
    <property type="entry name" value="Homeodomain"/>
    <property type="match status" value="1"/>
</dbReference>
<dbReference type="Pfam" id="PF04617">
    <property type="entry name" value="Hox9_act"/>
    <property type="match status" value="1"/>
</dbReference>
<dbReference type="PIRSF" id="PIRSF037109">
    <property type="entry name" value="Homeobox_Hox9"/>
    <property type="match status" value="1"/>
</dbReference>
<dbReference type="PRINTS" id="PR00024">
    <property type="entry name" value="HOMEOBOX"/>
</dbReference>
<dbReference type="SMART" id="SM00389">
    <property type="entry name" value="HOX"/>
    <property type="match status" value="1"/>
</dbReference>
<dbReference type="SUPFAM" id="SSF46689">
    <property type="entry name" value="Homeodomain-like"/>
    <property type="match status" value="1"/>
</dbReference>
<dbReference type="PROSITE" id="PS00027">
    <property type="entry name" value="HOMEOBOX_1"/>
    <property type="match status" value="1"/>
</dbReference>
<dbReference type="PROSITE" id="PS50071">
    <property type="entry name" value="HOMEOBOX_2"/>
    <property type="match status" value="1"/>
</dbReference>